<keyword id="KW-0488">Methylation</keyword>
<keyword id="KW-0687">Ribonucleoprotein</keyword>
<keyword id="KW-0689">Ribosomal protein</keyword>
<keyword id="KW-0694">RNA-binding</keyword>
<keyword id="KW-0699">rRNA-binding</keyword>
<keyword id="KW-0820">tRNA-binding</keyword>
<reference key="1">
    <citation type="journal article" date="2006" name="J. Bacteriol.">
        <title>The genome of the obligately intracellular bacterium Ehrlichia canis reveals themes of complex membrane structure and immune evasion strategies.</title>
        <authorList>
            <person name="Mavromatis K."/>
            <person name="Doyle C.K."/>
            <person name="Lykidis A."/>
            <person name="Ivanova N."/>
            <person name="Francino M.P."/>
            <person name="Chain P."/>
            <person name="Shin M."/>
            <person name="Malfatti S."/>
            <person name="Larimer F."/>
            <person name="Copeland A."/>
            <person name="Detter J.C."/>
            <person name="Land M."/>
            <person name="Richardson P.M."/>
            <person name="Yu X.J."/>
            <person name="Walker D.H."/>
            <person name="McBride J.W."/>
            <person name="Kyrpides N.C."/>
        </authorList>
    </citation>
    <scope>NUCLEOTIDE SEQUENCE [LARGE SCALE GENOMIC DNA]</scope>
    <source>
        <strain>Jake</strain>
    </source>
</reference>
<sequence length="123" mass="13658">MPTINQLVRKPRKSRSALNKAPALQHNPQKRAVCVKVYTTTPKKPNSALRKVARVKIAGYGSEVIAYIPGEGHNLQEHSVVLIRGGRVKDLPGVRYHIIRGALDSRGVQNRKKARSKYGVKKS</sequence>
<dbReference type="EMBL" id="CP000107">
    <property type="protein sequence ID" value="AAZ68210.1"/>
    <property type="molecule type" value="Genomic_DNA"/>
</dbReference>
<dbReference type="RefSeq" id="WP_011304288.1">
    <property type="nucleotide sequence ID" value="NC_007354.1"/>
</dbReference>
<dbReference type="SMR" id="Q3YSU5"/>
<dbReference type="FunCoup" id="Q3YSU5">
    <property type="interactions" value="315"/>
</dbReference>
<dbReference type="STRING" id="269484.Ecaj_0159"/>
<dbReference type="KEGG" id="ecn:Ecaj_0159"/>
<dbReference type="eggNOG" id="COG0048">
    <property type="taxonomic scope" value="Bacteria"/>
</dbReference>
<dbReference type="HOGENOM" id="CLU_104295_1_2_5"/>
<dbReference type="InParanoid" id="Q3YSU5"/>
<dbReference type="Proteomes" id="UP000000435">
    <property type="component" value="Chromosome"/>
</dbReference>
<dbReference type="GO" id="GO:0015935">
    <property type="term" value="C:small ribosomal subunit"/>
    <property type="evidence" value="ECO:0007669"/>
    <property type="project" value="InterPro"/>
</dbReference>
<dbReference type="GO" id="GO:0019843">
    <property type="term" value="F:rRNA binding"/>
    <property type="evidence" value="ECO:0007669"/>
    <property type="project" value="UniProtKB-UniRule"/>
</dbReference>
<dbReference type="GO" id="GO:0003735">
    <property type="term" value="F:structural constituent of ribosome"/>
    <property type="evidence" value="ECO:0007669"/>
    <property type="project" value="InterPro"/>
</dbReference>
<dbReference type="GO" id="GO:0000049">
    <property type="term" value="F:tRNA binding"/>
    <property type="evidence" value="ECO:0007669"/>
    <property type="project" value="UniProtKB-UniRule"/>
</dbReference>
<dbReference type="GO" id="GO:0006412">
    <property type="term" value="P:translation"/>
    <property type="evidence" value="ECO:0007669"/>
    <property type="project" value="UniProtKB-UniRule"/>
</dbReference>
<dbReference type="CDD" id="cd03368">
    <property type="entry name" value="Ribosomal_S12"/>
    <property type="match status" value="1"/>
</dbReference>
<dbReference type="FunFam" id="2.40.50.140:FF:000001">
    <property type="entry name" value="30S ribosomal protein S12"/>
    <property type="match status" value="1"/>
</dbReference>
<dbReference type="Gene3D" id="2.40.50.140">
    <property type="entry name" value="Nucleic acid-binding proteins"/>
    <property type="match status" value="1"/>
</dbReference>
<dbReference type="HAMAP" id="MF_00403_B">
    <property type="entry name" value="Ribosomal_uS12_B"/>
    <property type="match status" value="1"/>
</dbReference>
<dbReference type="InterPro" id="IPR012340">
    <property type="entry name" value="NA-bd_OB-fold"/>
</dbReference>
<dbReference type="InterPro" id="IPR006032">
    <property type="entry name" value="Ribosomal_uS12"/>
</dbReference>
<dbReference type="InterPro" id="IPR005679">
    <property type="entry name" value="Ribosomal_uS12_bac"/>
</dbReference>
<dbReference type="NCBIfam" id="TIGR00981">
    <property type="entry name" value="rpsL_bact"/>
    <property type="match status" value="1"/>
</dbReference>
<dbReference type="PANTHER" id="PTHR11652">
    <property type="entry name" value="30S RIBOSOMAL PROTEIN S12 FAMILY MEMBER"/>
    <property type="match status" value="1"/>
</dbReference>
<dbReference type="Pfam" id="PF00164">
    <property type="entry name" value="Ribosom_S12_S23"/>
    <property type="match status" value="1"/>
</dbReference>
<dbReference type="PIRSF" id="PIRSF002133">
    <property type="entry name" value="Ribosomal_S12/S23"/>
    <property type="match status" value="1"/>
</dbReference>
<dbReference type="PRINTS" id="PR01034">
    <property type="entry name" value="RIBOSOMALS12"/>
</dbReference>
<dbReference type="SUPFAM" id="SSF50249">
    <property type="entry name" value="Nucleic acid-binding proteins"/>
    <property type="match status" value="1"/>
</dbReference>
<dbReference type="PROSITE" id="PS00055">
    <property type="entry name" value="RIBOSOMAL_S12"/>
    <property type="match status" value="1"/>
</dbReference>
<comment type="function">
    <text evidence="2">With S4 and S5 plays an important role in translational accuracy.</text>
</comment>
<comment type="function">
    <text evidence="2">Interacts with and stabilizes bases of the 16S rRNA that are involved in tRNA selection in the A site and with the mRNA backbone. Located at the interface of the 30S and 50S subunits, it traverses the body of the 30S subunit contacting proteins on the other side and probably holding the rRNA structure together. The combined cluster of proteins S8, S12 and S17 appears to hold together the shoulder and platform of the 30S subunit.</text>
</comment>
<comment type="subunit">
    <text evidence="2">Part of the 30S ribosomal subunit. Contacts proteins S8 and S17. May interact with IF1 in the 30S initiation complex.</text>
</comment>
<comment type="similarity">
    <text evidence="2">Belongs to the universal ribosomal protein uS12 family.</text>
</comment>
<organism>
    <name type="scientific">Ehrlichia canis (strain Jake)</name>
    <dbReference type="NCBI Taxonomy" id="269484"/>
    <lineage>
        <taxon>Bacteria</taxon>
        <taxon>Pseudomonadati</taxon>
        <taxon>Pseudomonadota</taxon>
        <taxon>Alphaproteobacteria</taxon>
        <taxon>Rickettsiales</taxon>
        <taxon>Anaplasmataceae</taxon>
        <taxon>Ehrlichia</taxon>
    </lineage>
</organism>
<protein>
    <recommendedName>
        <fullName evidence="2">Small ribosomal subunit protein uS12</fullName>
    </recommendedName>
    <alternativeName>
        <fullName evidence="4">30S ribosomal protein S12</fullName>
    </alternativeName>
</protein>
<accession>Q3YSU5</accession>
<name>RS12_EHRCJ</name>
<feature type="chain" id="PRO_0000295972" description="Small ribosomal subunit protein uS12">
    <location>
        <begin position="1"/>
        <end position="123"/>
    </location>
</feature>
<feature type="region of interest" description="Disordered" evidence="3">
    <location>
        <begin position="1"/>
        <end position="25"/>
    </location>
</feature>
<feature type="modified residue" description="3-methylthioaspartic acid" evidence="1">
    <location>
        <position position="90"/>
    </location>
</feature>
<proteinExistence type="inferred from homology"/>
<gene>
    <name evidence="2" type="primary">rpsL</name>
    <name type="ordered locus">Ecaj_0159</name>
</gene>
<evidence type="ECO:0000250" key="1"/>
<evidence type="ECO:0000255" key="2">
    <source>
        <dbReference type="HAMAP-Rule" id="MF_00403"/>
    </source>
</evidence>
<evidence type="ECO:0000256" key="3">
    <source>
        <dbReference type="SAM" id="MobiDB-lite"/>
    </source>
</evidence>
<evidence type="ECO:0000305" key="4"/>